<organism>
    <name type="scientific">Arabidopsis thaliana</name>
    <name type="common">Mouse-ear cress</name>
    <dbReference type="NCBI Taxonomy" id="3702"/>
    <lineage>
        <taxon>Eukaryota</taxon>
        <taxon>Viridiplantae</taxon>
        <taxon>Streptophyta</taxon>
        <taxon>Embryophyta</taxon>
        <taxon>Tracheophyta</taxon>
        <taxon>Spermatophyta</taxon>
        <taxon>Magnoliopsida</taxon>
        <taxon>eudicotyledons</taxon>
        <taxon>Gunneridae</taxon>
        <taxon>Pentapetalae</taxon>
        <taxon>rosids</taxon>
        <taxon>malvids</taxon>
        <taxon>Brassicales</taxon>
        <taxon>Brassicaceae</taxon>
        <taxon>Camelineae</taxon>
        <taxon>Arabidopsis</taxon>
    </lineage>
</organism>
<proteinExistence type="evidence at transcript level"/>
<accession>O80493</accession>
<name>DMP8_ARATH</name>
<feature type="chain" id="PRO_0000441615" description="Protein DMP8" evidence="2">
    <location>
        <begin position="1"/>
        <end position="243"/>
    </location>
</feature>
<feature type="transmembrane region" description="Helical" evidence="2">
    <location>
        <begin position="70"/>
        <end position="90"/>
    </location>
</feature>
<feature type="transmembrane region" description="Helical" evidence="2">
    <location>
        <begin position="98"/>
        <end position="118"/>
    </location>
</feature>
<feature type="transmembrane region" description="Helical" evidence="2">
    <location>
        <begin position="174"/>
        <end position="194"/>
    </location>
</feature>
<feature type="transmembrane region" description="Helical" evidence="2">
    <location>
        <begin position="212"/>
        <end position="232"/>
    </location>
</feature>
<feature type="region of interest" description="Disordered" evidence="3">
    <location>
        <begin position="1"/>
        <end position="37"/>
    </location>
</feature>
<feature type="compositionally biased region" description="Low complexity" evidence="3">
    <location>
        <begin position="14"/>
        <end position="29"/>
    </location>
</feature>
<gene>
    <name evidence="5" type="primary">DMP8</name>
    <name evidence="7" type="ordered locus">At1g09157</name>
    <name evidence="8" type="ORF">T12M4.16</name>
</gene>
<sequence length="243" mass="26544">MEKTEESVGIRVYTTTTTQNPSPTSSRSPKPVPLSSLPMLPAGAAAGGGKGRKRRMVAKGVQKTVSKTSMLVNFLPTGTLLMFEMVLPTIYRDGDCNGINTLMIHLLLLLCAMSCFFFHFTDSFKASDGKIYYGFVTPRGLAVFMKPPSPGFGGGDVIAEKEIPVTDERYKLRVNDFVHSVMSVLVFMAIAFSDRRVTGCLFPGKEKEMDQVMESFPLMVGIVCSALFLVFPTSRYGVGCMST</sequence>
<comment type="function">
    <text evidence="1">Involved in membrane remodeling.</text>
</comment>
<comment type="subcellular location">
    <subcellularLocation>
        <location evidence="4">Endoplasmic reticulum membrane</location>
        <topology evidence="2">Multi-pass membrane protein</topology>
    </subcellularLocation>
    <subcellularLocation>
        <location evidence="4">Vacuole membrane</location>
        <topology evidence="2">Multi-pass membrane protein</topology>
    </subcellularLocation>
</comment>
<comment type="tissue specificity">
    <text evidence="4">Restricted to flowers.</text>
</comment>
<comment type="similarity">
    <text evidence="6">Belongs to the plant DMP1 protein family.</text>
</comment>
<dbReference type="EMBL" id="AC003114">
    <property type="protein sequence ID" value="AAC24089.1"/>
    <property type="molecule type" value="Genomic_DNA"/>
</dbReference>
<dbReference type="EMBL" id="CP002684">
    <property type="protein sequence ID" value="AEE28404.1"/>
    <property type="molecule type" value="Genomic_DNA"/>
</dbReference>
<dbReference type="EMBL" id="DQ487469">
    <property type="protein sequence ID" value="ABF59310.1"/>
    <property type="molecule type" value="Genomic_DNA"/>
</dbReference>
<dbReference type="PIR" id="H86223">
    <property type="entry name" value="H86223"/>
</dbReference>
<dbReference type="RefSeq" id="NP_001031010.1">
    <property type="nucleotide sequence ID" value="NM_001035933.2"/>
</dbReference>
<dbReference type="STRING" id="3702.O80493"/>
<dbReference type="GlyGen" id="O80493">
    <property type="glycosylation" value="2 sites"/>
</dbReference>
<dbReference type="PaxDb" id="3702-AT1G09157.1"/>
<dbReference type="ProteomicsDB" id="220709"/>
<dbReference type="EnsemblPlants" id="AT1G09157.1">
    <property type="protein sequence ID" value="AT1G09157.1"/>
    <property type="gene ID" value="AT1G09157"/>
</dbReference>
<dbReference type="GeneID" id="3766688"/>
<dbReference type="Gramene" id="AT1G09157.1">
    <property type="protein sequence ID" value="AT1G09157.1"/>
    <property type="gene ID" value="AT1G09157"/>
</dbReference>
<dbReference type="KEGG" id="ath:AT1G09157"/>
<dbReference type="Araport" id="AT1G09157"/>
<dbReference type="TAIR" id="AT1G09157">
    <property type="gene designation" value="DMP8"/>
</dbReference>
<dbReference type="eggNOG" id="ENOG502QPMT">
    <property type="taxonomic scope" value="Eukaryota"/>
</dbReference>
<dbReference type="HOGENOM" id="CLU_075936_2_0_1"/>
<dbReference type="InParanoid" id="O80493"/>
<dbReference type="OMA" id="HAIMSAM"/>
<dbReference type="OrthoDB" id="762629at2759"/>
<dbReference type="PhylomeDB" id="O80493"/>
<dbReference type="PRO" id="PR:O80493"/>
<dbReference type="Proteomes" id="UP000006548">
    <property type="component" value="Chromosome 1"/>
</dbReference>
<dbReference type="ExpressionAtlas" id="O80493">
    <property type="expression patterns" value="baseline and differential"/>
</dbReference>
<dbReference type="GO" id="GO:0005783">
    <property type="term" value="C:endoplasmic reticulum"/>
    <property type="evidence" value="ECO:0000314"/>
    <property type="project" value="TAIR"/>
</dbReference>
<dbReference type="GO" id="GO:0005789">
    <property type="term" value="C:endoplasmic reticulum membrane"/>
    <property type="evidence" value="ECO:0007669"/>
    <property type="project" value="UniProtKB-SubCell"/>
</dbReference>
<dbReference type="GO" id="GO:0009705">
    <property type="term" value="C:plant-type vacuole membrane"/>
    <property type="evidence" value="ECO:0000314"/>
    <property type="project" value="TAIR"/>
</dbReference>
<dbReference type="GO" id="GO:0010256">
    <property type="term" value="P:endomembrane system organization"/>
    <property type="evidence" value="ECO:0000250"/>
    <property type="project" value="UniProtKB"/>
</dbReference>
<dbReference type="InterPro" id="IPR007770">
    <property type="entry name" value="DMP"/>
</dbReference>
<dbReference type="PANTHER" id="PTHR31621">
    <property type="entry name" value="PROTEIN DMP3"/>
    <property type="match status" value="1"/>
</dbReference>
<dbReference type="PANTHER" id="PTHR31621:SF11">
    <property type="entry name" value="PROTEIN DMP8-RELATED"/>
    <property type="match status" value="1"/>
</dbReference>
<dbReference type="Pfam" id="PF05078">
    <property type="entry name" value="DUF679"/>
    <property type="match status" value="1"/>
</dbReference>
<keyword id="KW-0256">Endoplasmic reticulum</keyword>
<keyword id="KW-0472">Membrane</keyword>
<keyword id="KW-1185">Reference proteome</keyword>
<keyword id="KW-0812">Transmembrane</keyword>
<keyword id="KW-1133">Transmembrane helix</keyword>
<keyword id="KW-0926">Vacuole</keyword>
<reference key="1">
    <citation type="journal article" date="2000" name="Nature">
        <title>Sequence and analysis of chromosome 1 of the plant Arabidopsis thaliana.</title>
        <authorList>
            <person name="Theologis A."/>
            <person name="Ecker J.R."/>
            <person name="Palm C.J."/>
            <person name="Federspiel N.A."/>
            <person name="Kaul S."/>
            <person name="White O."/>
            <person name="Alonso J."/>
            <person name="Altafi H."/>
            <person name="Araujo R."/>
            <person name="Bowman C.L."/>
            <person name="Brooks S.Y."/>
            <person name="Buehler E."/>
            <person name="Chan A."/>
            <person name="Chao Q."/>
            <person name="Chen H."/>
            <person name="Cheuk R.F."/>
            <person name="Chin C.W."/>
            <person name="Chung M.K."/>
            <person name="Conn L."/>
            <person name="Conway A.B."/>
            <person name="Conway A.R."/>
            <person name="Creasy T.H."/>
            <person name="Dewar K."/>
            <person name="Dunn P."/>
            <person name="Etgu P."/>
            <person name="Feldblyum T.V."/>
            <person name="Feng J.-D."/>
            <person name="Fong B."/>
            <person name="Fujii C.Y."/>
            <person name="Gill J.E."/>
            <person name="Goldsmith A.D."/>
            <person name="Haas B."/>
            <person name="Hansen N.F."/>
            <person name="Hughes B."/>
            <person name="Huizar L."/>
            <person name="Hunter J.L."/>
            <person name="Jenkins J."/>
            <person name="Johnson-Hopson C."/>
            <person name="Khan S."/>
            <person name="Khaykin E."/>
            <person name="Kim C.J."/>
            <person name="Koo H.L."/>
            <person name="Kremenetskaia I."/>
            <person name="Kurtz D.B."/>
            <person name="Kwan A."/>
            <person name="Lam B."/>
            <person name="Langin-Hooper S."/>
            <person name="Lee A."/>
            <person name="Lee J.M."/>
            <person name="Lenz C.A."/>
            <person name="Li J.H."/>
            <person name="Li Y.-P."/>
            <person name="Lin X."/>
            <person name="Liu S.X."/>
            <person name="Liu Z.A."/>
            <person name="Luros J.S."/>
            <person name="Maiti R."/>
            <person name="Marziali A."/>
            <person name="Militscher J."/>
            <person name="Miranda M."/>
            <person name="Nguyen M."/>
            <person name="Nierman W.C."/>
            <person name="Osborne B.I."/>
            <person name="Pai G."/>
            <person name="Peterson J."/>
            <person name="Pham P.K."/>
            <person name="Rizzo M."/>
            <person name="Rooney T."/>
            <person name="Rowley D."/>
            <person name="Sakano H."/>
            <person name="Salzberg S.L."/>
            <person name="Schwartz J.R."/>
            <person name="Shinn P."/>
            <person name="Southwick A.M."/>
            <person name="Sun H."/>
            <person name="Tallon L.J."/>
            <person name="Tambunga G."/>
            <person name="Toriumi M.J."/>
            <person name="Town C.D."/>
            <person name="Utterback T."/>
            <person name="Van Aken S."/>
            <person name="Vaysberg M."/>
            <person name="Vysotskaia V.S."/>
            <person name="Walker M."/>
            <person name="Wu D."/>
            <person name="Yu G."/>
            <person name="Fraser C.M."/>
            <person name="Venter J.C."/>
            <person name="Davis R.W."/>
        </authorList>
    </citation>
    <scope>NUCLEOTIDE SEQUENCE [LARGE SCALE GENOMIC DNA]</scope>
    <source>
        <strain>cv. Columbia</strain>
    </source>
</reference>
<reference key="2">
    <citation type="journal article" date="2017" name="Plant J.">
        <title>Araport11: a complete reannotation of the Arabidopsis thaliana reference genome.</title>
        <authorList>
            <person name="Cheng C.Y."/>
            <person name="Krishnakumar V."/>
            <person name="Chan A.P."/>
            <person name="Thibaud-Nissen F."/>
            <person name="Schobel S."/>
            <person name="Town C.D."/>
        </authorList>
    </citation>
    <scope>GENOME REANNOTATION</scope>
    <source>
        <strain>cv. Columbia</strain>
    </source>
</reference>
<reference key="3">
    <citation type="journal article" date="2006" name="Plant Biotechnol. J.">
        <title>Simultaneous high-throughput recombinational cloning of open reading frames in closed and open configurations.</title>
        <authorList>
            <person name="Underwood B.A."/>
            <person name="Vanderhaeghen R."/>
            <person name="Whitford R."/>
            <person name="Town C.D."/>
            <person name="Hilson P."/>
        </authorList>
    </citation>
    <scope>NUCLEOTIDE SEQUENCE [LARGE SCALE GENOMIC DNA]</scope>
    <source>
        <strain>cv. Columbia</strain>
    </source>
</reference>
<reference key="4">
    <citation type="journal article" date="2010" name="Plant Biol. 12 Suppl.">
        <title>Expression, localisation and phylogeny of a novel family of plant-specific membrane proteins.</title>
        <authorList>
            <person name="Kasaras A."/>
            <person name="Kunze R."/>
        </authorList>
    </citation>
    <scope>TISSUE SPECIFICITY</scope>
    <scope>SUBCELLULAR LOCATION</scope>
    <scope>GENE FAMILY</scope>
    <scope>NOMENCLATURE</scope>
    <source>
        <strain>cv. Columbia</strain>
    </source>
</reference>
<evidence type="ECO:0000250" key="1">
    <source>
        <dbReference type="UniProtKB" id="Q9LVF4"/>
    </source>
</evidence>
<evidence type="ECO:0000255" key="2"/>
<evidence type="ECO:0000256" key="3">
    <source>
        <dbReference type="SAM" id="MobiDB-lite"/>
    </source>
</evidence>
<evidence type="ECO:0000269" key="4">
    <source>
    </source>
</evidence>
<evidence type="ECO:0000303" key="5">
    <source>
    </source>
</evidence>
<evidence type="ECO:0000305" key="6"/>
<evidence type="ECO:0000312" key="7">
    <source>
        <dbReference type="Araport" id="AT1G09157"/>
    </source>
</evidence>
<evidence type="ECO:0000312" key="8">
    <source>
        <dbReference type="EMBL" id="AAC24089.1"/>
    </source>
</evidence>
<protein>
    <recommendedName>
        <fullName evidence="5">Protein DMP8</fullName>
        <shortName evidence="5">AtDMP8</shortName>
    </recommendedName>
</protein>